<proteinExistence type="inferred from homology"/>
<sequence>MSIPAGKNEMPAIHPGEILREEYLKPMGLSAHALAKALHVSPSRINEIVREQRGITADTALRLVRYFGGDAQSWLNMQTAYDLKMAEQDKQSINIIIPLSTDARNVEL</sequence>
<name>VAPI_DICNO</name>
<evidence type="ECO:0000255" key="1">
    <source>
        <dbReference type="PROSITE-ProRule" id="PRU00257"/>
    </source>
</evidence>
<evidence type="ECO:0000305" key="2"/>
<dbReference type="EMBL" id="L31763">
    <property type="protein sequence ID" value="AAB00945.1"/>
    <property type="molecule type" value="Genomic_DNA"/>
</dbReference>
<dbReference type="RefSeq" id="WP_012030618.1">
    <property type="nucleotide sequence ID" value="NZ_CP031475.1"/>
</dbReference>
<dbReference type="SMR" id="Q46560"/>
<dbReference type="OMA" id="MNLQSEY"/>
<dbReference type="GO" id="GO:0003677">
    <property type="term" value="F:DNA binding"/>
    <property type="evidence" value="ECO:0007669"/>
    <property type="project" value="UniProtKB-KW"/>
</dbReference>
<dbReference type="CDD" id="cd00093">
    <property type="entry name" value="HTH_XRE"/>
    <property type="match status" value="1"/>
</dbReference>
<dbReference type="Gene3D" id="1.10.260.40">
    <property type="entry name" value="lambda repressor-like DNA-binding domains"/>
    <property type="match status" value="1"/>
</dbReference>
<dbReference type="InterPro" id="IPR001387">
    <property type="entry name" value="Cro/C1-type_HTH"/>
</dbReference>
<dbReference type="InterPro" id="IPR010982">
    <property type="entry name" value="Lambda_DNA-bd_dom_sf"/>
</dbReference>
<dbReference type="InterPro" id="IPR013430">
    <property type="entry name" value="Toxin_antidote_HigA"/>
</dbReference>
<dbReference type="NCBIfam" id="TIGR02607">
    <property type="entry name" value="antidote_HigA"/>
    <property type="match status" value="1"/>
</dbReference>
<dbReference type="PANTHER" id="PTHR36924">
    <property type="entry name" value="ANTITOXIN HIGA-1"/>
    <property type="match status" value="1"/>
</dbReference>
<dbReference type="PANTHER" id="PTHR36924:SF1">
    <property type="entry name" value="ANTITOXIN HIGA-1"/>
    <property type="match status" value="1"/>
</dbReference>
<dbReference type="Pfam" id="PF01381">
    <property type="entry name" value="HTH_3"/>
    <property type="match status" value="1"/>
</dbReference>
<dbReference type="SMART" id="SM00530">
    <property type="entry name" value="HTH_XRE"/>
    <property type="match status" value="1"/>
</dbReference>
<dbReference type="SUPFAM" id="SSF47413">
    <property type="entry name" value="lambda repressor-like DNA-binding domains"/>
    <property type="match status" value="1"/>
</dbReference>
<dbReference type="PROSITE" id="PS50943">
    <property type="entry name" value="HTH_CROC1"/>
    <property type="match status" value="1"/>
</dbReference>
<organism>
    <name type="scientific">Dichelobacter nodosus</name>
    <name type="common">Bacteroides nodosus</name>
    <dbReference type="NCBI Taxonomy" id="870"/>
    <lineage>
        <taxon>Bacteria</taxon>
        <taxon>Pseudomonadati</taxon>
        <taxon>Pseudomonadota</taxon>
        <taxon>Gammaproteobacteria</taxon>
        <taxon>Cardiobacteriales</taxon>
        <taxon>Cardiobacteriaceae</taxon>
        <taxon>Dichelobacter</taxon>
    </lineage>
</organism>
<keyword id="KW-0238">DNA-binding</keyword>
<keyword id="KW-0843">Virulence</keyword>
<reference key="1">
    <citation type="journal article" date="1994" name="J. Bacteriol.">
        <title>Genetic organization of the duplicated vap region of the Dichelobacter nodosus genome.</title>
        <authorList>
            <person name="Katz M.E."/>
            <person name="Wright C.L."/>
            <person name="Gartside T.S."/>
            <person name="Cheetham B.F."/>
            <person name="Doidge C.V."/>
            <person name="Moses E.K."/>
            <person name="Rood J.I."/>
        </authorList>
    </citation>
    <scope>NUCLEOTIDE SEQUENCE [GENOMIC DNA]</scope>
    <source>
        <strain>A198</strain>
    </source>
</reference>
<comment type="similarity">
    <text evidence="2">Belongs to the VapA/VapI family.</text>
</comment>
<protein>
    <recommendedName>
        <fullName>Virulence-associated protein I</fullName>
    </recommendedName>
</protein>
<accession>Q46560</accession>
<feature type="chain" id="PRO_0000149743" description="Virulence-associated protein I">
    <location>
        <begin position="1"/>
        <end position="108"/>
    </location>
</feature>
<feature type="domain" description="HTH cro/C1-type" evidence="1">
    <location>
        <begin position="19"/>
        <end position="74"/>
    </location>
</feature>
<feature type="DNA-binding region" description="H-T-H motif" evidence="1">
    <location>
        <begin position="30"/>
        <end position="49"/>
    </location>
</feature>
<gene>
    <name type="primary">vapI</name>
</gene>